<evidence type="ECO:0000255" key="1">
    <source>
        <dbReference type="HAMAP-Rule" id="MF_00815"/>
    </source>
</evidence>
<name>ATPG_STAEQ</name>
<accession>Q5HMB8</accession>
<comment type="function">
    <text evidence="1">Produces ATP from ADP in the presence of a proton gradient across the membrane. The gamma chain is believed to be important in regulating ATPase activity and the flow of protons through the CF(0) complex.</text>
</comment>
<comment type="subunit">
    <text evidence="1">F-type ATPases have 2 components, CF(1) - the catalytic core - and CF(0) - the membrane proton channel. CF(1) has five subunits: alpha(3), beta(3), gamma(1), delta(1), epsilon(1). CF(0) has three main subunits: a, b and c.</text>
</comment>
<comment type="subcellular location">
    <subcellularLocation>
        <location evidence="1">Cell membrane</location>
        <topology evidence="1">Peripheral membrane protein</topology>
    </subcellularLocation>
</comment>
<comment type="similarity">
    <text evidence="1">Belongs to the ATPase gamma chain family.</text>
</comment>
<keyword id="KW-0066">ATP synthesis</keyword>
<keyword id="KW-1003">Cell membrane</keyword>
<keyword id="KW-0139">CF(1)</keyword>
<keyword id="KW-0375">Hydrogen ion transport</keyword>
<keyword id="KW-0406">Ion transport</keyword>
<keyword id="KW-0472">Membrane</keyword>
<keyword id="KW-1185">Reference proteome</keyword>
<keyword id="KW-0813">Transport</keyword>
<feature type="chain" id="PRO_0000073380" description="ATP synthase gamma chain">
    <location>
        <begin position="1"/>
        <end position="288"/>
    </location>
</feature>
<proteinExistence type="inferred from homology"/>
<reference key="1">
    <citation type="journal article" date="2005" name="J. Bacteriol.">
        <title>Insights on evolution of virulence and resistance from the complete genome analysis of an early methicillin-resistant Staphylococcus aureus strain and a biofilm-producing methicillin-resistant Staphylococcus epidermidis strain.</title>
        <authorList>
            <person name="Gill S.R."/>
            <person name="Fouts D.E."/>
            <person name="Archer G.L."/>
            <person name="Mongodin E.F."/>
            <person name="DeBoy R.T."/>
            <person name="Ravel J."/>
            <person name="Paulsen I.T."/>
            <person name="Kolonay J.F."/>
            <person name="Brinkac L.M."/>
            <person name="Beanan M.J."/>
            <person name="Dodson R.J."/>
            <person name="Daugherty S.C."/>
            <person name="Madupu R."/>
            <person name="Angiuoli S.V."/>
            <person name="Durkin A.S."/>
            <person name="Haft D.H."/>
            <person name="Vamathevan J.J."/>
            <person name="Khouri H."/>
            <person name="Utterback T.R."/>
            <person name="Lee C."/>
            <person name="Dimitrov G."/>
            <person name="Jiang L."/>
            <person name="Qin H."/>
            <person name="Weidman J."/>
            <person name="Tran K."/>
            <person name="Kang K.H."/>
            <person name="Hance I.R."/>
            <person name="Nelson K.E."/>
            <person name="Fraser C.M."/>
        </authorList>
    </citation>
    <scope>NUCLEOTIDE SEQUENCE [LARGE SCALE GENOMIC DNA]</scope>
    <source>
        <strain>ATCC 35984 / DSM 28319 / BCRC 17069 / CCUG 31568 / BM 3577 / RP62A</strain>
    </source>
</reference>
<organism>
    <name type="scientific">Staphylococcus epidermidis (strain ATCC 35984 / DSM 28319 / BCRC 17069 / CCUG 31568 / BM 3577 / RP62A)</name>
    <dbReference type="NCBI Taxonomy" id="176279"/>
    <lineage>
        <taxon>Bacteria</taxon>
        <taxon>Bacillati</taxon>
        <taxon>Bacillota</taxon>
        <taxon>Bacilli</taxon>
        <taxon>Bacillales</taxon>
        <taxon>Staphylococcaceae</taxon>
        <taxon>Staphylococcus</taxon>
    </lineage>
</organism>
<sequence>MASLKEIDSRIKSTSKMKQITKAMNMVSSSKLRRAEKNTKSFRPYMEKMQDAITAVAGSNSTSNHPMLKSRDIKRSGYLVITSDKGLAGAYSTNVLKSLVNDINSKHNDSSEYSLIVLGQQGVDFFKHRGYEIESSLVEVPDQPSFKSIQSIAKHAIDLFSEENIDELTIYYSHYVSVLENKPATKQVLPLSQEDSGQGHGQMSSYEFEPDKESILSVILPQYVESLIYGTILDAKASEHASRMTAMRNASDNATELIDDLSLEYNRARQAAITQQITEIVGGSSALE</sequence>
<gene>
    <name evidence="1" type="primary">atpG</name>
    <name type="ordered locus">SERP1710</name>
</gene>
<dbReference type="EMBL" id="CP000029">
    <property type="protein sequence ID" value="AAW55096.1"/>
    <property type="molecule type" value="Genomic_DNA"/>
</dbReference>
<dbReference type="RefSeq" id="WP_001829942.1">
    <property type="nucleotide sequence ID" value="NC_002976.3"/>
</dbReference>
<dbReference type="SMR" id="Q5HMB8"/>
<dbReference type="STRING" id="176279.SERP1710"/>
<dbReference type="GeneID" id="50018198"/>
<dbReference type="KEGG" id="ser:SERP1710"/>
<dbReference type="eggNOG" id="COG0224">
    <property type="taxonomic scope" value="Bacteria"/>
</dbReference>
<dbReference type="HOGENOM" id="CLU_050669_0_1_9"/>
<dbReference type="Proteomes" id="UP000000531">
    <property type="component" value="Chromosome"/>
</dbReference>
<dbReference type="GO" id="GO:0005886">
    <property type="term" value="C:plasma membrane"/>
    <property type="evidence" value="ECO:0007669"/>
    <property type="project" value="UniProtKB-SubCell"/>
</dbReference>
<dbReference type="GO" id="GO:0045259">
    <property type="term" value="C:proton-transporting ATP synthase complex"/>
    <property type="evidence" value="ECO:0007669"/>
    <property type="project" value="UniProtKB-KW"/>
</dbReference>
<dbReference type="GO" id="GO:0005524">
    <property type="term" value="F:ATP binding"/>
    <property type="evidence" value="ECO:0007669"/>
    <property type="project" value="UniProtKB-UniRule"/>
</dbReference>
<dbReference type="GO" id="GO:0046933">
    <property type="term" value="F:proton-transporting ATP synthase activity, rotational mechanism"/>
    <property type="evidence" value="ECO:0007669"/>
    <property type="project" value="UniProtKB-UniRule"/>
</dbReference>
<dbReference type="GO" id="GO:0042777">
    <property type="term" value="P:proton motive force-driven plasma membrane ATP synthesis"/>
    <property type="evidence" value="ECO:0007669"/>
    <property type="project" value="UniProtKB-UniRule"/>
</dbReference>
<dbReference type="CDD" id="cd12151">
    <property type="entry name" value="F1-ATPase_gamma"/>
    <property type="match status" value="1"/>
</dbReference>
<dbReference type="FunFam" id="1.10.287.80:FF:000019">
    <property type="entry name" value="ATP synthase gamma chain"/>
    <property type="match status" value="1"/>
</dbReference>
<dbReference type="FunFam" id="3.40.1380.10:FF:000002">
    <property type="entry name" value="ATP synthase gamma chain"/>
    <property type="match status" value="1"/>
</dbReference>
<dbReference type="Gene3D" id="3.40.1380.10">
    <property type="match status" value="1"/>
</dbReference>
<dbReference type="Gene3D" id="1.10.287.80">
    <property type="entry name" value="ATP synthase, gamma subunit, helix hairpin domain"/>
    <property type="match status" value="1"/>
</dbReference>
<dbReference type="HAMAP" id="MF_00815">
    <property type="entry name" value="ATP_synth_gamma_bact"/>
    <property type="match status" value="1"/>
</dbReference>
<dbReference type="InterPro" id="IPR035968">
    <property type="entry name" value="ATP_synth_F1_ATPase_gsu"/>
</dbReference>
<dbReference type="InterPro" id="IPR000131">
    <property type="entry name" value="ATP_synth_F1_gsu"/>
</dbReference>
<dbReference type="NCBIfam" id="TIGR01146">
    <property type="entry name" value="ATPsyn_F1gamma"/>
    <property type="match status" value="1"/>
</dbReference>
<dbReference type="PANTHER" id="PTHR11693">
    <property type="entry name" value="ATP SYNTHASE GAMMA CHAIN"/>
    <property type="match status" value="1"/>
</dbReference>
<dbReference type="PANTHER" id="PTHR11693:SF22">
    <property type="entry name" value="ATP SYNTHASE SUBUNIT GAMMA, MITOCHONDRIAL"/>
    <property type="match status" value="1"/>
</dbReference>
<dbReference type="Pfam" id="PF00231">
    <property type="entry name" value="ATP-synt"/>
    <property type="match status" value="1"/>
</dbReference>
<dbReference type="PRINTS" id="PR00126">
    <property type="entry name" value="ATPASEGAMMA"/>
</dbReference>
<dbReference type="SUPFAM" id="SSF52943">
    <property type="entry name" value="ATP synthase (F1-ATPase), gamma subunit"/>
    <property type="match status" value="1"/>
</dbReference>
<protein>
    <recommendedName>
        <fullName evidence="1">ATP synthase gamma chain</fullName>
    </recommendedName>
    <alternativeName>
        <fullName evidence="1">ATP synthase F1 sector gamma subunit</fullName>
    </alternativeName>
    <alternativeName>
        <fullName evidence="1">F-ATPase gamma subunit</fullName>
    </alternativeName>
</protein>